<organism>
    <name type="scientific">Buchnera aphidicola subsp. Baizongia pistaciae (strain Bp)</name>
    <dbReference type="NCBI Taxonomy" id="224915"/>
    <lineage>
        <taxon>Bacteria</taxon>
        <taxon>Pseudomonadati</taxon>
        <taxon>Pseudomonadota</taxon>
        <taxon>Gammaproteobacteria</taxon>
        <taxon>Enterobacterales</taxon>
        <taxon>Erwiniaceae</taxon>
        <taxon>Buchnera</taxon>
    </lineage>
</organism>
<proteinExistence type="inferred from homology"/>
<evidence type="ECO:0000255" key="1">
    <source>
        <dbReference type="HAMAP-Rule" id="MF_00503"/>
    </source>
</evidence>
<evidence type="ECO:0000305" key="2"/>
<protein>
    <recommendedName>
        <fullName evidence="1">Large ribosomal subunit protein bL9</fullName>
    </recommendedName>
    <alternativeName>
        <fullName evidence="2">50S ribosomal protein L9</fullName>
    </alternativeName>
</protein>
<name>RL9_BUCBP</name>
<keyword id="KW-1185">Reference proteome</keyword>
<keyword id="KW-0687">Ribonucleoprotein</keyword>
<keyword id="KW-0689">Ribosomal protein</keyword>
<keyword id="KW-0694">RNA-binding</keyword>
<keyword id="KW-0699">rRNA-binding</keyword>
<dbReference type="EMBL" id="AE016826">
    <property type="protein sequence ID" value="AAO27211.1"/>
    <property type="molecule type" value="Genomic_DNA"/>
</dbReference>
<dbReference type="RefSeq" id="WP_011091612.1">
    <property type="nucleotide sequence ID" value="NC_004545.1"/>
</dbReference>
<dbReference type="SMR" id="Q89A42"/>
<dbReference type="STRING" id="224915.bbp_508"/>
<dbReference type="KEGG" id="bab:bbp_508"/>
<dbReference type="eggNOG" id="COG0359">
    <property type="taxonomic scope" value="Bacteria"/>
</dbReference>
<dbReference type="HOGENOM" id="CLU_078938_4_1_6"/>
<dbReference type="OrthoDB" id="9788336at2"/>
<dbReference type="Proteomes" id="UP000000601">
    <property type="component" value="Chromosome"/>
</dbReference>
<dbReference type="GO" id="GO:1990904">
    <property type="term" value="C:ribonucleoprotein complex"/>
    <property type="evidence" value="ECO:0007669"/>
    <property type="project" value="UniProtKB-KW"/>
</dbReference>
<dbReference type="GO" id="GO:0005840">
    <property type="term" value="C:ribosome"/>
    <property type="evidence" value="ECO:0007669"/>
    <property type="project" value="UniProtKB-KW"/>
</dbReference>
<dbReference type="GO" id="GO:0019843">
    <property type="term" value="F:rRNA binding"/>
    <property type="evidence" value="ECO:0007669"/>
    <property type="project" value="UniProtKB-UniRule"/>
</dbReference>
<dbReference type="GO" id="GO:0003735">
    <property type="term" value="F:structural constituent of ribosome"/>
    <property type="evidence" value="ECO:0007669"/>
    <property type="project" value="InterPro"/>
</dbReference>
<dbReference type="GO" id="GO:0006412">
    <property type="term" value="P:translation"/>
    <property type="evidence" value="ECO:0007669"/>
    <property type="project" value="UniProtKB-UniRule"/>
</dbReference>
<dbReference type="Gene3D" id="3.10.430.100">
    <property type="entry name" value="Ribosomal protein L9, C-terminal domain"/>
    <property type="match status" value="1"/>
</dbReference>
<dbReference type="Gene3D" id="3.40.5.10">
    <property type="entry name" value="Ribosomal protein L9, N-terminal domain"/>
    <property type="match status" value="1"/>
</dbReference>
<dbReference type="HAMAP" id="MF_00503">
    <property type="entry name" value="Ribosomal_bL9"/>
    <property type="match status" value="1"/>
</dbReference>
<dbReference type="InterPro" id="IPR000244">
    <property type="entry name" value="Ribosomal_bL9"/>
</dbReference>
<dbReference type="InterPro" id="IPR009027">
    <property type="entry name" value="Ribosomal_bL9/RNase_H1_N"/>
</dbReference>
<dbReference type="InterPro" id="IPR020594">
    <property type="entry name" value="Ribosomal_bL9_bac/chp"/>
</dbReference>
<dbReference type="InterPro" id="IPR020069">
    <property type="entry name" value="Ribosomal_bL9_C"/>
</dbReference>
<dbReference type="InterPro" id="IPR036791">
    <property type="entry name" value="Ribosomal_bL9_C_sf"/>
</dbReference>
<dbReference type="InterPro" id="IPR020070">
    <property type="entry name" value="Ribosomal_bL9_N"/>
</dbReference>
<dbReference type="InterPro" id="IPR036935">
    <property type="entry name" value="Ribosomal_bL9_N_sf"/>
</dbReference>
<dbReference type="NCBIfam" id="TIGR00158">
    <property type="entry name" value="L9"/>
    <property type="match status" value="1"/>
</dbReference>
<dbReference type="PANTHER" id="PTHR21368">
    <property type="entry name" value="50S RIBOSOMAL PROTEIN L9"/>
    <property type="match status" value="1"/>
</dbReference>
<dbReference type="Pfam" id="PF03948">
    <property type="entry name" value="Ribosomal_L9_C"/>
    <property type="match status" value="1"/>
</dbReference>
<dbReference type="Pfam" id="PF01281">
    <property type="entry name" value="Ribosomal_L9_N"/>
    <property type="match status" value="1"/>
</dbReference>
<dbReference type="SUPFAM" id="SSF55658">
    <property type="entry name" value="L9 N-domain-like"/>
    <property type="match status" value="1"/>
</dbReference>
<dbReference type="SUPFAM" id="SSF55653">
    <property type="entry name" value="Ribosomal protein L9 C-domain"/>
    <property type="match status" value="1"/>
</dbReference>
<dbReference type="PROSITE" id="PS00651">
    <property type="entry name" value="RIBOSOMAL_L9"/>
    <property type="match status" value="1"/>
</dbReference>
<accession>Q89A42</accession>
<feature type="chain" id="PRO_0000176624" description="Large ribosomal subunit protein bL9">
    <location>
        <begin position="1"/>
        <end position="154"/>
    </location>
</feature>
<reference key="1">
    <citation type="journal article" date="2003" name="Proc. Natl. Acad. Sci. U.S.A.">
        <title>Reductive genome evolution in Buchnera aphidicola.</title>
        <authorList>
            <person name="van Ham R.C.H.J."/>
            <person name="Kamerbeek J."/>
            <person name="Palacios C."/>
            <person name="Rausell C."/>
            <person name="Abascal F."/>
            <person name="Bastolla U."/>
            <person name="Fernandez J.M."/>
            <person name="Jimenez L."/>
            <person name="Postigo M."/>
            <person name="Silva F.J."/>
            <person name="Tamames J."/>
            <person name="Viguera E."/>
            <person name="Latorre A."/>
            <person name="Valencia A."/>
            <person name="Moran F."/>
            <person name="Moya A."/>
        </authorList>
    </citation>
    <scope>NUCLEOTIDE SEQUENCE [LARGE SCALE GENOMIC DNA]</scope>
    <source>
        <strain>Bp</strain>
    </source>
</reference>
<gene>
    <name evidence="1" type="primary">rplI</name>
    <name type="ordered locus">bbp_508</name>
</gene>
<sequence length="154" mass="17409">MQIILLEKLDNLGNKGDILFVKSGYARNFLIPYGKAIFATKDNIKFEINKKEELERELIKKISIAKTKCEKIKNIKSIVIPAQVGIEGKLFGSVGSRDIAKKLSELSNIKIKKHEIYFLNGALKHVGQHKVIFKPHHSVSITVEINIVSQDKDK</sequence>
<comment type="function">
    <text evidence="1">Binds to the 23S rRNA.</text>
</comment>
<comment type="similarity">
    <text evidence="1">Belongs to the bacterial ribosomal protein bL9 family.</text>
</comment>